<protein>
    <recommendedName>
        <fullName>Ubiquitin carboxyl-terminal hydrolase 6</fullName>
        <ecNumber>3.4.19.12</ecNumber>
    </recommendedName>
    <alternativeName>
        <fullName>Deubiquitinating enzyme 6</fullName>
        <shortName>AtUBP6</shortName>
    </alternativeName>
    <alternativeName>
        <fullName>Ubiquitin thioesterase 6</fullName>
    </alternativeName>
    <alternativeName>
        <fullName>Ubiquitin-specific-processing protease 6</fullName>
    </alternativeName>
</protein>
<accession>Q949Y0</accession>
<accession>Q56ZE7</accession>
<accession>Q9C8H9</accession>
<accession>Q9FPT4</accession>
<feature type="chain" id="PRO_0000313033" description="Ubiquitin carboxyl-terminal hydrolase 6">
    <location>
        <begin position="1"/>
        <end position="482"/>
    </location>
</feature>
<feature type="domain" description="Ubiquitin-like" evidence="1">
    <location>
        <begin position="2"/>
        <end position="77"/>
    </location>
</feature>
<feature type="domain" description="USP">
    <location>
        <begin position="104"/>
        <end position="478"/>
    </location>
</feature>
<feature type="region of interest" description="Calmodulin-binding">
    <location>
        <begin position="172"/>
        <end position="191"/>
    </location>
</feature>
<feature type="region of interest" description="Disordered" evidence="4">
    <location>
        <begin position="350"/>
        <end position="407"/>
    </location>
</feature>
<feature type="compositionally biased region" description="Basic and acidic residues" evidence="4">
    <location>
        <begin position="350"/>
        <end position="361"/>
    </location>
</feature>
<feature type="compositionally biased region" description="Basic and acidic residues" evidence="4">
    <location>
        <begin position="371"/>
        <end position="381"/>
    </location>
</feature>
<feature type="compositionally biased region" description="Low complexity" evidence="4">
    <location>
        <begin position="382"/>
        <end position="393"/>
    </location>
</feature>
<feature type="active site" description="Nucleophile">
    <location>
        <position position="113"/>
    </location>
</feature>
<feature type="active site" description="Proton acceptor" evidence="2 3">
    <location>
        <position position="430"/>
    </location>
</feature>
<feature type="mutagenesis site" description="Loss of activity." evidence="5">
    <original>C</original>
    <variation>S</variation>
    <location>
        <position position="113"/>
    </location>
</feature>
<feature type="mutagenesis site" description="Abolishes the calmodulin-binding." evidence="5">
    <original>W</original>
    <variation>R</variation>
    <location>
        <position position="175"/>
    </location>
</feature>
<feature type="mutagenesis site" description="Abolishes the calmodulin-binding." evidence="5">
    <original>L</original>
    <variation>K</variation>
    <location>
        <position position="178"/>
    </location>
</feature>
<feature type="sequence conflict" description="In Ref. 1; AAG42751." evidence="6" ref="1">
    <original>Y</original>
    <variation>F</variation>
    <location>
        <position position="207"/>
    </location>
</feature>
<keyword id="KW-0025">Alternative splicing</keyword>
<keyword id="KW-0112">Calmodulin-binding</keyword>
<keyword id="KW-0378">Hydrolase</keyword>
<keyword id="KW-0645">Protease</keyword>
<keyword id="KW-1185">Reference proteome</keyword>
<keyword id="KW-0788">Thiol protease</keyword>
<keyword id="KW-0833">Ubl conjugation pathway</keyword>
<comment type="function">
    <text>Recognizes and hydrolyzes the peptide bond at the C-terminal Gly of ubiquitin. Involved in the processing of poly-ubiquitin precursors as well as that of ubiquitinated proteins.</text>
</comment>
<comment type="catalytic activity">
    <reaction>
        <text>Thiol-dependent hydrolysis of ester, thioester, amide, peptide and isopeptide bonds formed by the C-terminal Gly of ubiquitin (a 76-residue protein attached to proteins as an intracellular targeting signal).</text>
        <dbReference type="EC" id="3.4.19.12"/>
    </reaction>
</comment>
<comment type="subunit">
    <text evidence="5">Interacts with calmodulin (CaM).</text>
</comment>
<comment type="alternative products">
    <event type="alternative splicing"/>
    <isoform>
        <id>Q949Y0-1</id>
        <name>1</name>
        <sequence type="displayed"/>
    </isoform>
    <text>A number of isoforms are produced. According to EST sequences.</text>
</comment>
<comment type="similarity">
    <text evidence="6">Belongs to the peptidase C19 family.</text>
</comment>
<comment type="sequence caution" evidence="6">
    <conflict type="erroneous gene model prediction">
        <sequence resource="EMBL-CDS" id="AAG50872"/>
    </conflict>
</comment>
<reference key="1">
    <citation type="journal article" date="2000" name="Plant Physiol.">
        <title>The ubiquitin-specific protease family from Arabidopsis. AtUBP1 and 2 are required for the resistance to the amino acid analog canavanine.</title>
        <authorList>
            <person name="Yan N."/>
            <person name="Doelling J.H."/>
            <person name="Falbel T.G."/>
            <person name="Durski A.M."/>
            <person name="Vierstra R.D."/>
        </authorList>
    </citation>
    <scope>NUCLEOTIDE SEQUENCE [MRNA]</scope>
    <scope>GENE FAMILY ORGANIZATION</scope>
    <scope>NOMENCLATURE</scope>
    <source>
        <strain>cv. Columbia</strain>
    </source>
</reference>
<reference key="2">
    <citation type="journal article" date="2000" name="Nature">
        <title>Sequence and analysis of chromosome 1 of the plant Arabidopsis thaliana.</title>
        <authorList>
            <person name="Theologis A."/>
            <person name="Ecker J.R."/>
            <person name="Palm C.J."/>
            <person name="Federspiel N.A."/>
            <person name="Kaul S."/>
            <person name="White O."/>
            <person name="Alonso J."/>
            <person name="Altafi H."/>
            <person name="Araujo R."/>
            <person name="Bowman C.L."/>
            <person name="Brooks S.Y."/>
            <person name="Buehler E."/>
            <person name="Chan A."/>
            <person name="Chao Q."/>
            <person name="Chen H."/>
            <person name="Cheuk R.F."/>
            <person name="Chin C.W."/>
            <person name="Chung M.K."/>
            <person name="Conn L."/>
            <person name="Conway A.B."/>
            <person name="Conway A.R."/>
            <person name="Creasy T.H."/>
            <person name="Dewar K."/>
            <person name="Dunn P."/>
            <person name="Etgu P."/>
            <person name="Feldblyum T.V."/>
            <person name="Feng J.-D."/>
            <person name="Fong B."/>
            <person name="Fujii C.Y."/>
            <person name="Gill J.E."/>
            <person name="Goldsmith A.D."/>
            <person name="Haas B."/>
            <person name="Hansen N.F."/>
            <person name="Hughes B."/>
            <person name="Huizar L."/>
            <person name="Hunter J.L."/>
            <person name="Jenkins J."/>
            <person name="Johnson-Hopson C."/>
            <person name="Khan S."/>
            <person name="Khaykin E."/>
            <person name="Kim C.J."/>
            <person name="Koo H.L."/>
            <person name="Kremenetskaia I."/>
            <person name="Kurtz D.B."/>
            <person name="Kwan A."/>
            <person name="Lam B."/>
            <person name="Langin-Hooper S."/>
            <person name="Lee A."/>
            <person name="Lee J.M."/>
            <person name="Lenz C.A."/>
            <person name="Li J.H."/>
            <person name="Li Y.-P."/>
            <person name="Lin X."/>
            <person name="Liu S.X."/>
            <person name="Liu Z.A."/>
            <person name="Luros J.S."/>
            <person name="Maiti R."/>
            <person name="Marziali A."/>
            <person name="Militscher J."/>
            <person name="Miranda M."/>
            <person name="Nguyen M."/>
            <person name="Nierman W.C."/>
            <person name="Osborne B.I."/>
            <person name="Pai G."/>
            <person name="Peterson J."/>
            <person name="Pham P.K."/>
            <person name="Rizzo M."/>
            <person name="Rooney T."/>
            <person name="Rowley D."/>
            <person name="Sakano H."/>
            <person name="Salzberg S.L."/>
            <person name="Schwartz J.R."/>
            <person name="Shinn P."/>
            <person name="Southwick A.M."/>
            <person name="Sun H."/>
            <person name="Tallon L.J."/>
            <person name="Tambunga G."/>
            <person name="Toriumi M.J."/>
            <person name="Town C.D."/>
            <person name="Utterback T."/>
            <person name="Van Aken S."/>
            <person name="Vaysberg M."/>
            <person name="Vysotskaia V.S."/>
            <person name="Walker M."/>
            <person name="Wu D."/>
            <person name="Yu G."/>
            <person name="Fraser C.M."/>
            <person name="Venter J.C."/>
            <person name="Davis R.W."/>
        </authorList>
    </citation>
    <scope>NUCLEOTIDE SEQUENCE [LARGE SCALE GENOMIC DNA]</scope>
    <source>
        <strain>cv. Columbia</strain>
    </source>
</reference>
<reference key="3">
    <citation type="journal article" date="2017" name="Plant J.">
        <title>Araport11: a complete reannotation of the Arabidopsis thaliana reference genome.</title>
        <authorList>
            <person name="Cheng C.Y."/>
            <person name="Krishnakumar V."/>
            <person name="Chan A.P."/>
            <person name="Thibaud-Nissen F."/>
            <person name="Schobel S."/>
            <person name="Town C.D."/>
        </authorList>
    </citation>
    <scope>GENOME REANNOTATION</scope>
    <source>
        <strain>cv. Columbia</strain>
    </source>
</reference>
<reference key="4">
    <citation type="journal article" date="2003" name="Science">
        <title>Empirical analysis of transcriptional activity in the Arabidopsis genome.</title>
        <authorList>
            <person name="Yamada K."/>
            <person name="Lim J."/>
            <person name="Dale J.M."/>
            <person name="Chen H."/>
            <person name="Shinn P."/>
            <person name="Palm C.J."/>
            <person name="Southwick A.M."/>
            <person name="Wu H.C."/>
            <person name="Kim C.J."/>
            <person name="Nguyen M."/>
            <person name="Pham P.K."/>
            <person name="Cheuk R.F."/>
            <person name="Karlin-Newmann G."/>
            <person name="Liu S.X."/>
            <person name="Lam B."/>
            <person name="Sakano H."/>
            <person name="Wu T."/>
            <person name="Yu G."/>
            <person name="Miranda M."/>
            <person name="Quach H.L."/>
            <person name="Tripp M."/>
            <person name="Chang C.H."/>
            <person name="Lee J.M."/>
            <person name="Toriumi M.J."/>
            <person name="Chan M.M."/>
            <person name="Tang C.C."/>
            <person name="Onodera C.S."/>
            <person name="Deng J.M."/>
            <person name="Akiyama K."/>
            <person name="Ansari Y."/>
            <person name="Arakawa T."/>
            <person name="Banh J."/>
            <person name="Banno F."/>
            <person name="Bowser L."/>
            <person name="Brooks S.Y."/>
            <person name="Carninci P."/>
            <person name="Chao Q."/>
            <person name="Choy N."/>
            <person name="Enju A."/>
            <person name="Goldsmith A.D."/>
            <person name="Gurjal M."/>
            <person name="Hansen N.F."/>
            <person name="Hayashizaki Y."/>
            <person name="Johnson-Hopson C."/>
            <person name="Hsuan V.W."/>
            <person name="Iida K."/>
            <person name="Karnes M."/>
            <person name="Khan S."/>
            <person name="Koesema E."/>
            <person name="Ishida J."/>
            <person name="Jiang P.X."/>
            <person name="Jones T."/>
            <person name="Kawai J."/>
            <person name="Kamiya A."/>
            <person name="Meyers C."/>
            <person name="Nakajima M."/>
            <person name="Narusaka M."/>
            <person name="Seki M."/>
            <person name="Sakurai T."/>
            <person name="Satou M."/>
            <person name="Tamse R."/>
            <person name="Vaysberg M."/>
            <person name="Wallender E.K."/>
            <person name="Wong C."/>
            <person name="Yamamura Y."/>
            <person name="Yuan S."/>
            <person name="Shinozaki K."/>
            <person name="Davis R.W."/>
            <person name="Theologis A."/>
            <person name="Ecker J.R."/>
        </authorList>
    </citation>
    <scope>NUCLEOTIDE SEQUENCE [LARGE SCALE MRNA]</scope>
    <source>
        <strain>cv. Columbia</strain>
    </source>
</reference>
<reference key="5">
    <citation type="submission" date="2002-03" db="EMBL/GenBank/DDBJ databases">
        <title>Full-length cDNA from Arabidopsis thaliana.</title>
        <authorList>
            <person name="Brover V.V."/>
            <person name="Troukhan M.E."/>
            <person name="Alexandrov N.A."/>
            <person name="Lu Y.-P."/>
            <person name="Flavell R.B."/>
            <person name="Feldmann K.A."/>
        </authorList>
    </citation>
    <scope>NUCLEOTIDE SEQUENCE [LARGE SCALE MRNA]</scope>
</reference>
<reference key="6">
    <citation type="submission" date="2005-03" db="EMBL/GenBank/DDBJ databases">
        <title>Large-scale analysis of RIKEN Arabidopsis full-length (RAFL) cDNAs.</title>
        <authorList>
            <person name="Totoki Y."/>
            <person name="Seki M."/>
            <person name="Ishida J."/>
            <person name="Nakajima M."/>
            <person name="Enju A."/>
            <person name="Kamiya A."/>
            <person name="Narusaka M."/>
            <person name="Shin-i T."/>
            <person name="Nakagawa M."/>
            <person name="Sakamoto N."/>
            <person name="Oishi K."/>
            <person name="Kohara Y."/>
            <person name="Kobayashi M."/>
            <person name="Toyoda A."/>
            <person name="Sakaki Y."/>
            <person name="Sakurai T."/>
            <person name="Iida K."/>
            <person name="Akiyama K."/>
            <person name="Satou M."/>
            <person name="Toyoda T."/>
            <person name="Konagaya A."/>
            <person name="Carninci P."/>
            <person name="Kawai J."/>
            <person name="Hayashizaki Y."/>
            <person name="Shinozaki K."/>
        </authorList>
    </citation>
    <scope>NUCLEOTIDE SEQUENCE [LARGE SCALE MRNA] OF 336-482</scope>
    <source>
        <strain>cv. Columbia</strain>
    </source>
</reference>
<reference key="7">
    <citation type="journal article" date="2005" name="FEBS Lett.">
        <title>Arabidopsis ubiquitin-specific protease 6 (AtUBP6) interacts with calmodulin.</title>
        <authorList>
            <person name="Moon B.C."/>
            <person name="Choi M.S."/>
            <person name="Kang Y.H."/>
            <person name="Kim M.C."/>
            <person name="Cheong M.S."/>
            <person name="Park C.Y."/>
            <person name="Yoo J.H."/>
            <person name="Koo S.C."/>
            <person name="Lee S.M."/>
            <person name="Lim C.O."/>
            <person name="Cho M.J."/>
            <person name="Chung W.S."/>
        </authorList>
    </citation>
    <scope>INTERACTION WITH CALMODULIN</scope>
    <scope>MUTAGENESIS OF CYS-113; TRP-175 AND LEU-178</scope>
</reference>
<sequence length="482" mass="53696">MPTVSVKWQKKVLDGIEIDVSLPPYVFKAQLYDLTGVPPERQKIMVKGGLLKDDGDWAAIGVKDGQKLMMMGTADEIVKAPEKAIVFAEDLPEEALATNLGYSAGLVNLGNTCYMNSTVQCLKSVPELKSALSNYSLAARSNDVDQTSHMLTVATRELFGELDRSVNAVSPSQFWMVLRKKYPQFSQLQNGMHMQQDAEECWTQLLYTLSQSLKAPTSSEGADAVKALFGVNLQSRLHCQESGEESSETESVYSLKCHISHEVNHLHEGLKHGLKGELEKTSPALGRTALYVKESLIDSLPRYLTVQFVRFFWKRESNQKAKILRKVDYPLVLDIFDLCSEDLRKKLEAPRQKLREEEGKKLGLQTSAKSGSKDSDVKMTDAEASANGSGESSTVNPQEGTSSEKETHMTGIYDLVAVLTHKGRSADSGHYVAWVKQESGKWIQYDDDNPSMQREEDITKLSGGGDWHMAYITMYKARFVSM</sequence>
<gene>
    <name type="primary">UBP6</name>
    <name type="ordered locus">At1g51710</name>
    <name type="ORF">F19C24.8</name>
</gene>
<proteinExistence type="evidence at protein level"/>
<evidence type="ECO:0000255" key="1">
    <source>
        <dbReference type="PROSITE-ProRule" id="PRU00214"/>
    </source>
</evidence>
<evidence type="ECO:0000255" key="2">
    <source>
        <dbReference type="PROSITE-ProRule" id="PRU10092"/>
    </source>
</evidence>
<evidence type="ECO:0000255" key="3">
    <source>
        <dbReference type="PROSITE-ProRule" id="PRU10093"/>
    </source>
</evidence>
<evidence type="ECO:0000256" key="4">
    <source>
        <dbReference type="SAM" id="MobiDB-lite"/>
    </source>
</evidence>
<evidence type="ECO:0000269" key="5">
    <source>
    </source>
</evidence>
<evidence type="ECO:0000305" key="6"/>
<name>UBP6_ARATH</name>
<dbReference type="EC" id="3.4.19.12"/>
<dbReference type="EMBL" id="AF302660">
    <property type="protein sequence ID" value="AAG42751.1"/>
    <property type="molecule type" value="mRNA"/>
</dbReference>
<dbReference type="EMBL" id="AC025294">
    <property type="protein sequence ID" value="AAG50872.1"/>
    <property type="status" value="ALT_SEQ"/>
    <property type="molecule type" value="Genomic_DNA"/>
</dbReference>
<dbReference type="EMBL" id="CP002684">
    <property type="protein sequence ID" value="AEE32705.1"/>
    <property type="molecule type" value="Genomic_DNA"/>
</dbReference>
<dbReference type="EMBL" id="AY050817">
    <property type="protein sequence ID" value="AAK92752.1"/>
    <property type="molecule type" value="mRNA"/>
</dbReference>
<dbReference type="EMBL" id="AY114081">
    <property type="protein sequence ID" value="AAM45129.1"/>
    <property type="molecule type" value="mRNA"/>
</dbReference>
<dbReference type="EMBL" id="BT000658">
    <property type="protein sequence ID" value="AAN31805.1"/>
    <property type="molecule type" value="mRNA"/>
</dbReference>
<dbReference type="EMBL" id="AY084730">
    <property type="protein sequence ID" value="AAM61304.1"/>
    <property type="molecule type" value="mRNA"/>
</dbReference>
<dbReference type="EMBL" id="AK221019">
    <property type="protein sequence ID" value="BAD94710.1"/>
    <property type="molecule type" value="mRNA"/>
</dbReference>
<dbReference type="PIR" id="A96556">
    <property type="entry name" value="A96556"/>
</dbReference>
<dbReference type="RefSeq" id="NP_564596.1">
    <molecule id="Q949Y0-1"/>
    <property type="nucleotide sequence ID" value="NM_104049.4"/>
</dbReference>
<dbReference type="SMR" id="Q949Y0"/>
<dbReference type="BioGRID" id="26821">
    <property type="interactions" value="11"/>
</dbReference>
<dbReference type="FunCoup" id="Q949Y0">
    <property type="interactions" value="5042"/>
</dbReference>
<dbReference type="MINT" id="Q949Y0"/>
<dbReference type="STRING" id="3702.Q949Y0"/>
<dbReference type="MEROPS" id="C19.094"/>
<dbReference type="iPTMnet" id="Q949Y0"/>
<dbReference type="PaxDb" id="3702-AT1G51710.1"/>
<dbReference type="ProteomicsDB" id="228475">
    <molecule id="Q949Y0-1"/>
</dbReference>
<dbReference type="DNASU" id="841596"/>
<dbReference type="EnsemblPlants" id="AT1G51710.1">
    <molecule id="Q949Y0-1"/>
    <property type="protein sequence ID" value="AT1G51710.1"/>
    <property type="gene ID" value="AT1G51710"/>
</dbReference>
<dbReference type="GeneID" id="841596"/>
<dbReference type="Gramene" id="AT1G51710.1">
    <molecule id="Q949Y0-1"/>
    <property type="protein sequence ID" value="AT1G51710.1"/>
    <property type="gene ID" value="AT1G51710"/>
</dbReference>
<dbReference type="KEGG" id="ath:AT1G51710"/>
<dbReference type="Araport" id="AT1G51710"/>
<dbReference type="TAIR" id="AT1G51710">
    <property type="gene designation" value="UBP6"/>
</dbReference>
<dbReference type="eggNOG" id="KOG1872">
    <property type="taxonomic scope" value="Eukaryota"/>
</dbReference>
<dbReference type="HOGENOM" id="CLU_017549_2_1_1"/>
<dbReference type="InParanoid" id="Q949Y0"/>
<dbReference type="OMA" id="FKSDAEY"/>
<dbReference type="OrthoDB" id="333239at2759"/>
<dbReference type="PhylomeDB" id="Q949Y0"/>
<dbReference type="PRO" id="PR:Q949Y0"/>
<dbReference type="Proteomes" id="UP000006548">
    <property type="component" value="Chromosome 1"/>
</dbReference>
<dbReference type="ExpressionAtlas" id="Q949Y0">
    <property type="expression patterns" value="baseline and differential"/>
</dbReference>
<dbReference type="GO" id="GO:0005634">
    <property type="term" value="C:nucleus"/>
    <property type="evidence" value="ECO:0007005"/>
    <property type="project" value="TAIR"/>
</dbReference>
<dbReference type="GO" id="GO:0009506">
    <property type="term" value="C:plasmodesma"/>
    <property type="evidence" value="ECO:0007005"/>
    <property type="project" value="TAIR"/>
</dbReference>
<dbReference type="GO" id="GO:0005516">
    <property type="term" value="F:calmodulin binding"/>
    <property type="evidence" value="ECO:0000314"/>
    <property type="project" value="TAIR"/>
</dbReference>
<dbReference type="GO" id="GO:0004843">
    <property type="term" value="F:cysteine-type deubiquitinase activity"/>
    <property type="evidence" value="ECO:0007669"/>
    <property type="project" value="UniProtKB-EC"/>
</dbReference>
<dbReference type="GO" id="GO:0043161">
    <property type="term" value="P:proteasome-mediated ubiquitin-dependent protein catabolic process"/>
    <property type="evidence" value="ECO:0007669"/>
    <property type="project" value="InterPro"/>
</dbReference>
<dbReference type="GO" id="GO:0016579">
    <property type="term" value="P:protein deubiquitination"/>
    <property type="evidence" value="ECO:0000304"/>
    <property type="project" value="TAIR"/>
</dbReference>
<dbReference type="CDD" id="cd02657">
    <property type="entry name" value="Peptidase_C19A"/>
    <property type="match status" value="1"/>
</dbReference>
<dbReference type="CDD" id="cd16104">
    <property type="entry name" value="Ubl_USP14_like"/>
    <property type="match status" value="1"/>
</dbReference>
<dbReference type="FunFam" id="3.10.20.90:FF:000119">
    <property type="entry name" value="Ubiquitin carboxyl-terminal hydrolase 14"/>
    <property type="match status" value="1"/>
</dbReference>
<dbReference type="FunFam" id="3.90.70.10:FF:000032">
    <property type="entry name" value="Ubiquitin carboxyl-terminal hydrolase 14"/>
    <property type="match status" value="1"/>
</dbReference>
<dbReference type="Gene3D" id="3.90.70.10">
    <property type="entry name" value="Cysteine proteinases"/>
    <property type="match status" value="1"/>
</dbReference>
<dbReference type="Gene3D" id="3.10.20.90">
    <property type="entry name" value="Phosphatidylinositol 3-kinase Catalytic Subunit, Chain A, domain 1"/>
    <property type="match status" value="1"/>
</dbReference>
<dbReference type="InterPro" id="IPR038765">
    <property type="entry name" value="Papain-like_cys_pep_sf"/>
</dbReference>
<dbReference type="InterPro" id="IPR001394">
    <property type="entry name" value="Peptidase_C19_UCH"/>
</dbReference>
<dbReference type="InterPro" id="IPR000626">
    <property type="entry name" value="Ubiquitin-like_dom"/>
</dbReference>
<dbReference type="InterPro" id="IPR029071">
    <property type="entry name" value="Ubiquitin-like_domsf"/>
</dbReference>
<dbReference type="InterPro" id="IPR019954">
    <property type="entry name" value="Ubiquitin_CS"/>
</dbReference>
<dbReference type="InterPro" id="IPR044635">
    <property type="entry name" value="UBP14-like"/>
</dbReference>
<dbReference type="InterPro" id="IPR018200">
    <property type="entry name" value="USP_CS"/>
</dbReference>
<dbReference type="InterPro" id="IPR028889">
    <property type="entry name" value="USP_dom"/>
</dbReference>
<dbReference type="PANTHER" id="PTHR43982">
    <property type="entry name" value="UBIQUITIN CARBOXYL-TERMINAL HYDROLASE"/>
    <property type="match status" value="1"/>
</dbReference>
<dbReference type="PANTHER" id="PTHR43982:SF1">
    <property type="entry name" value="UBIQUITIN CARBOXYL-TERMINAL HYDROLASE 14"/>
    <property type="match status" value="1"/>
</dbReference>
<dbReference type="Pfam" id="PF00240">
    <property type="entry name" value="ubiquitin"/>
    <property type="match status" value="1"/>
</dbReference>
<dbReference type="Pfam" id="PF00443">
    <property type="entry name" value="UCH"/>
    <property type="match status" value="1"/>
</dbReference>
<dbReference type="SMART" id="SM00213">
    <property type="entry name" value="UBQ"/>
    <property type="match status" value="1"/>
</dbReference>
<dbReference type="SUPFAM" id="SSF54001">
    <property type="entry name" value="Cysteine proteinases"/>
    <property type="match status" value="1"/>
</dbReference>
<dbReference type="SUPFAM" id="SSF54236">
    <property type="entry name" value="Ubiquitin-like"/>
    <property type="match status" value="1"/>
</dbReference>
<dbReference type="PROSITE" id="PS00299">
    <property type="entry name" value="UBIQUITIN_1"/>
    <property type="match status" value="1"/>
</dbReference>
<dbReference type="PROSITE" id="PS50053">
    <property type="entry name" value="UBIQUITIN_2"/>
    <property type="match status" value="1"/>
</dbReference>
<dbReference type="PROSITE" id="PS00972">
    <property type="entry name" value="USP_1"/>
    <property type="match status" value="1"/>
</dbReference>
<dbReference type="PROSITE" id="PS00973">
    <property type="entry name" value="USP_2"/>
    <property type="match status" value="1"/>
</dbReference>
<dbReference type="PROSITE" id="PS50235">
    <property type="entry name" value="USP_3"/>
    <property type="match status" value="1"/>
</dbReference>
<organism>
    <name type="scientific">Arabidopsis thaliana</name>
    <name type="common">Mouse-ear cress</name>
    <dbReference type="NCBI Taxonomy" id="3702"/>
    <lineage>
        <taxon>Eukaryota</taxon>
        <taxon>Viridiplantae</taxon>
        <taxon>Streptophyta</taxon>
        <taxon>Embryophyta</taxon>
        <taxon>Tracheophyta</taxon>
        <taxon>Spermatophyta</taxon>
        <taxon>Magnoliopsida</taxon>
        <taxon>eudicotyledons</taxon>
        <taxon>Gunneridae</taxon>
        <taxon>Pentapetalae</taxon>
        <taxon>rosids</taxon>
        <taxon>malvids</taxon>
        <taxon>Brassicales</taxon>
        <taxon>Brassicaceae</taxon>
        <taxon>Camelineae</taxon>
        <taxon>Arabidopsis</taxon>
    </lineage>
</organism>